<proteinExistence type="inferred from homology"/>
<gene>
    <name evidence="1" type="primary">pepA</name>
    <name type="ordered locus">tlr1745</name>
</gene>
<name>AMPA_THEVB</name>
<dbReference type="EC" id="3.4.11.1" evidence="1"/>
<dbReference type="EC" id="3.4.11.10" evidence="1"/>
<dbReference type="EMBL" id="BA000039">
    <property type="protein sequence ID" value="BAC09297.1"/>
    <property type="molecule type" value="Genomic_DNA"/>
</dbReference>
<dbReference type="RefSeq" id="NP_682535.1">
    <property type="nucleotide sequence ID" value="NC_004113.1"/>
</dbReference>
<dbReference type="RefSeq" id="WP_011057582.1">
    <property type="nucleotide sequence ID" value="NC_004113.1"/>
</dbReference>
<dbReference type="SMR" id="Q8DI46"/>
<dbReference type="STRING" id="197221.gene:10748349"/>
<dbReference type="MEROPS" id="M17.A03"/>
<dbReference type="EnsemblBacteria" id="BAC09297">
    <property type="protein sequence ID" value="BAC09297"/>
    <property type="gene ID" value="BAC09297"/>
</dbReference>
<dbReference type="KEGG" id="tel:tlr1745"/>
<dbReference type="PATRIC" id="fig|197221.4.peg.1826"/>
<dbReference type="eggNOG" id="COG0260">
    <property type="taxonomic scope" value="Bacteria"/>
</dbReference>
<dbReference type="Proteomes" id="UP000000440">
    <property type="component" value="Chromosome"/>
</dbReference>
<dbReference type="GO" id="GO:0005737">
    <property type="term" value="C:cytoplasm"/>
    <property type="evidence" value="ECO:0007669"/>
    <property type="project" value="UniProtKB-SubCell"/>
</dbReference>
<dbReference type="GO" id="GO:0030145">
    <property type="term" value="F:manganese ion binding"/>
    <property type="evidence" value="ECO:0007669"/>
    <property type="project" value="UniProtKB-UniRule"/>
</dbReference>
<dbReference type="GO" id="GO:0070006">
    <property type="term" value="F:metalloaminopeptidase activity"/>
    <property type="evidence" value="ECO:0007669"/>
    <property type="project" value="InterPro"/>
</dbReference>
<dbReference type="GO" id="GO:0006508">
    <property type="term" value="P:proteolysis"/>
    <property type="evidence" value="ECO:0007669"/>
    <property type="project" value="UniProtKB-KW"/>
</dbReference>
<dbReference type="CDD" id="cd00433">
    <property type="entry name" value="Peptidase_M17"/>
    <property type="match status" value="1"/>
</dbReference>
<dbReference type="Gene3D" id="3.40.220.10">
    <property type="entry name" value="Leucine Aminopeptidase, subunit E, domain 1"/>
    <property type="match status" value="1"/>
</dbReference>
<dbReference type="Gene3D" id="3.40.630.10">
    <property type="entry name" value="Zn peptidases"/>
    <property type="match status" value="1"/>
</dbReference>
<dbReference type="HAMAP" id="MF_00181">
    <property type="entry name" value="Cytosol_peptidase_M17"/>
    <property type="match status" value="1"/>
</dbReference>
<dbReference type="InterPro" id="IPR011356">
    <property type="entry name" value="Leucine_aapep/pepB"/>
</dbReference>
<dbReference type="InterPro" id="IPR043472">
    <property type="entry name" value="Macro_dom-like"/>
</dbReference>
<dbReference type="InterPro" id="IPR000819">
    <property type="entry name" value="Peptidase_M17_C"/>
</dbReference>
<dbReference type="InterPro" id="IPR023042">
    <property type="entry name" value="Peptidase_M17_leu_NH2_pept"/>
</dbReference>
<dbReference type="InterPro" id="IPR008283">
    <property type="entry name" value="Peptidase_M17_N"/>
</dbReference>
<dbReference type="NCBIfam" id="NF002073">
    <property type="entry name" value="PRK00913.1-2"/>
    <property type="match status" value="1"/>
</dbReference>
<dbReference type="NCBIfam" id="NF002074">
    <property type="entry name" value="PRK00913.1-4"/>
    <property type="match status" value="1"/>
</dbReference>
<dbReference type="NCBIfam" id="NF002076">
    <property type="entry name" value="PRK00913.2-3"/>
    <property type="match status" value="1"/>
</dbReference>
<dbReference type="NCBIfam" id="NF002083">
    <property type="entry name" value="PRK00913.3-5"/>
    <property type="match status" value="1"/>
</dbReference>
<dbReference type="PANTHER" id="PTHR11963:SF23">
    <property type="entry name" value="CYTOSOL AMINOPEPTIDASE"/>
    <property type="match status" value="1"/>
</dbReference>
<dbReference type="PANTHER" id="PTHR11963">
    <property type="entry name" value="LEUCINE AMINOPEPTIDASE-RELATED"/>
    <property type="match status" value="1"/>
</dbReference>
<dbReference type="Pfam" id="PF00883">
    <property type="entry name" value="Peptidase_M17"/>
    <property type="match status" value="1"/>
</dbReference>
<dbReference type="Pfam" id="PF02789">
    <property type="entry name" value="Peptidase_M17_N"/>
    <property type="match status" value="1"/>
</dbReference>
<dbReference type="PRINTS" id="PR00481">
    <property type="entry name" value="LAMNOPPTDASE"/>
</dbReference>
<dbReference type="SUPFAM" id="SSF52949">
    <property type="entry name" value="Macro domain-like"/>
    <property type="match status" value="1"/>
</dbReference>
<dbReference type="SUPFAM" id="SSF53187">
    <property type="entry name" value="Zn-dependent exopeptidases"/>
    <property type="match status" value="1"/>
</dbReference>
<dbReference type="PROSITE" id="PS00631">
    <property type="entry name" value="CYTOSOL_AP"/>
    <property type="match status" value="1"/>
</dbReference>
<feature type="chain" id="PRO_0000165802" description="Probable cytosol aminopeptidase">
    <location>
        <begin position="1"/>
        <end position="497"/>
    </location>
</feature>
<feature type="active site" evidence="1">
    <location>
        <position position="276"/>
    </location>
</feature>
<feature type="active site" evidence="1">
    <location>
        <position position="351"/>
    </location>
</feature>
<feature type="binding site" evidence="1">
    <location>
        <position position="264"/>
    </location>
    <ligand>
        <name>Mn(2+)</name>
        <dbReference type="ChEBI" id="CHEBI:29035"/>
        <label>2</label>
    </ligand>
</feature>
<feature type="binding site" evidence="1">
    <location>
        <position position="269"/>
    </location>
    <ligand>
        <name>Mn(2+)</name>
        <dbReference type="ChEBI" id="CHEBI:29035"/>
        <label>1</label>
    </ligand>
</feature>
<feature type="binding site" evidence="1">
    <location>
        <position position="269"/>
    </location>
    <ligand>
        <name>Mn(2+)</name>
        <dbReference type="ChEBI" id="CHEBI:29035"/>
        <label>2</label>
    </ligand>
</feature>
<feature type="binding site" evidence="1">
    <location>
        <position position="287"/>
    </location>
    <ligand>
        <name>Mn(2+)</name>
        <dbReference type="ChEBI" id="CHEBI:29035"/>
        <label>2</label>
    </ligand>
</feature>
<feature type="binding site" evidence="1">
    <location>
        <position position="347"/>
    </location>
    <ligand>
        <name>Mn(2+)</name>
        <dbReference type="ChEBI" id="CHEBI:29035"/>
        <label>1</label>
    </ligand>
</feature>
<feature type="binding site" evidence="1">
    <location>
        <position position="349"/>
    </location>
    <ligand>
        <name>Mn(2+)</name>
        <dbReference type="ChEBI" id="CHEBI:29035"/>
        <label>1</label>
    </ligand>
</feature>
<feature type="binding site" evidence="1">
    <location>
        <position position="349"/>
    </location>
    <ligand>
        <name>Mn(2+)</name>
        <dbReference type="ChEBI" id="CHEBI:29035"/>
        <label>2</label>
    </ligand>
</feature>
<comment type="function">
    <text evidence="1">Presumably involved in the processing and regular turnover of intracellular proteins. Catalyzes the removal of unsubstituted N-terminal amino acids from various peptides.</text>
</comment>
<comment type="catalytic activity">
    <reaction evidence="1">
        <text>Release of an N-terminal amino acid, Xaa-|-Yaa-, in which Xaa is preferably Leu, but may be other amino acids including Pro although not Arg or Lys, and Yaa may be Pro. Amino acid amides and methyl esters are also readily hydrolyzed, but rates on arylamides are exceedingly low.</text>
        <dbReference type="EC" id="3.4.11.1"/>
    </reaction>
</comment>
<comment type="catalytic activity">
    <reaction evidence="1">
        <text>Release of an N-terminal amino acid, preferentially leucine, but not glutamic or aspartic acids.</text>
        <dbReference type="EC" id="3.4.11.10"/>
    </reaction>
</comment>
<comment type="cofactor">
    <cofactor evidence="1">
        <name>Mn(2+)</name>
        <dbReference type="ChEBI" id="CHEBI:29035"/>
    </cofactor>
    <text evidence="1">Binds 2 manganese ions per subunit.</text>
</comment>
<comment type="subcellular location">
    <subcellularLocation>
        <location evidence="1">Cytoplasm</location>
    </subcellularLocation>
</comment>
<comment type="similarity">
    <text evidence="1">Belongs to the peptidase M17 family.</text>
</comment>
<evidence type="ECO:0000255" key="1">
    <source>
        <dbReference type="HAMAP-Rule" id="MF_00181"/>
    </source>
</evidence>
<protein>
    <recommendedName>
        <fullName evidence="1">Probable cytosol aminopeptidase</fullName>
        <ecNumber evidence="1">3.4.11.1</ecNumber>
    </recommendedName>
    <alternativeName>
        <fullName evidence="1">Leucine aminopeptidase</fullName>
        <shortName evidence="1">LAP</shortName>
        <ecNumber evidence="1">3.4.11.10</ecNumber>
    </alternativeName>
    <alternativeName>
        <fullName evidence="1">Leucyl aminopeptidase</fullName>
    </alternativeName>
</protein>
<reference key="1">
    <citation type="journal article" date="2002" name="DNA Res.">
        <title>Complete genome structure of the thermophilic cyanobacterium Thermosynechococcus elongatus BP-1.</title>
        <authorList>
            <person name="Nakamura Y."/>
            <person name="Kaneko T."/>
            <person name="Sato S."/>
            <person name="Ikeuchi M."/>
            <person name="Katoh H."/>
            <person name="Sasamoto S."/>
            <person name="Watanabe A."/>
            <person name="Iriguchi M."/>
            <person name="Kawashima K."/>
            <person name="Kimura T."/>
            <person name="Kishida Y."/>
            <person name="Kiyokawa C."/>
            <person name="Kohara M."/>
            <person name="Matsumoto M."/>
            <person name="Matsuno A."/>
            <person name="Nakazaki N."/>
            <person name="Shimpo S."/>
            <person name="Sugimoto M."/>
            <person name="Takeuchi C."/>
            <person name="Yamada M."/>
            <person name="Tabata S."/>
        </authorList>
    </citation>
    <scope>NUCLEOTIDE SEQUENCE [LARGE SCALE GENOMIC DNA]</scope>
    <source>
        <strain>NIES-2133 / IAM M-273 / BP-1</strain>
    </source>
</reference>
<sequence>MQLQTVPTAIPDWSGDLLAIAVFQTEGTLTLTDPYTTLDQRLNGLLQELINEGEFQGKSGTSLLMRLLPNFPLKKLLLVGLGNREDFNLEALRRTAATIARTARRERAKTLGMALPHETLEAADAAQAIAEGVILALHSDVRFKTDPEARKLLPYPEVVTLLGLGEQTAALTRAQQICDGVILARELVNAPANEVTPVTLAETAQQLAATYGLTAKILEREDCGALGMGAFLGVAQASDLPPKFIHLTYTSPGTVHRKIALVGKGLTFDSGGLNLKTQGGIETMKMDMGGAAAVLGTAKVLGQLKPPGIEVHFIIAATENMISGRALHPGDILTASNGKTIEVNNTDAEGRLTLADALVYAEKLGVDAIVDLATLTGACIVALGDNIAGLWSNNAELAQALQKASDRCGEKFWQMPLENKYFEAMKSQVADMKNTGPRSAGSITAALFLQQFVDHTPWAHLDIAGPVWTEKEDGYNNPCGTGYPVRTLVEWLCSLSS</sequence>
<keyword id="KW-0031">Aminopeptidase</keyword>
<keyword id="KW-0963">Cytoplasm</keyword>
<keyword id="KW-0378">Hydrolase</keyword>
<keyword id="KW-0464">Manganese</keyword>
<keyword id="KW-0479">Metal-binding</keyword>
<keyword id="KW-0645">Protease</keyword>
<keyword id="KW-1185">Reference proteome</keyword>
<accession>Q8DI46</accession>
<organism>
    <name type="scientific">Thermosynechococcus vestitus (strain NIES-2133 / IAM M-273 / BP-1)</name>
    <dbReference type="NCBI Taxonomy" id="197221"/>
    <lineage>
        <taxon>Bacteria</taxon>
        <taxon>Bacillati</taxon>
        <taxon>Cyanobacteriota</taxon>
        <taxon>Cyanophyceae</taxon>
        <taxon>Acaryochloridales</taxon>
        <taxon>Thermosynechococcaceae</taxon>
        <taxon>Thermosynechococcus</taxon>
    </lineage>
</organism>